<sequence length="560" mass="62705">MNKLENLKQLLAGKFKIENFKFTHAVGDDVIEVPKEDAPALLLFLRESGQFDFLMDVCGADYPSREKRFDVVYNLFNSKDSSRLRVKAQVGEGESIGTAIPAYRGADWFEREAYDMFGIIFEGHPNLRKILTHHQFVGHPLRKDYDANNQQACTNSLPIHFNNEPGSPGDVLNDKYLPLNIGPSHTAMHGTLRVMAEMDGETIVRCNNEIGYLHRCFEKMAETHPYNQVIPYTDRLNYCSAPMNNIGYCKAVERLLGVEIPPKAQAMRVILAELSRIIDHTIAIGTGAMDLGALTSFFYMFGMREKVYGLFEKLCGARLTVSMTRIGGMAQDAPEGWFDEVLALVKEIRKGTDEMANMVIDNKIFIQRTKNVCPVSAADAIQWGYTGPMLRACGVNLDLRKAQPYYGYDALDFDVPVGTNGDIYDRYLVRFEEMRQSVRIIEQVCKNVPGGDYTIRDKGIVLPEKKDVYGNIEGLMNHFMLIIKGLRPPVGEVYDATEAANGELGFYLVSDGSANPYRLKVRPPCFAIYQSFPTVVKGAMLADAIATVASMNLIAGELDR</sequence>
<proteinExistence type="inferred from homology"/>
<reference key="1">
    <citation type="journal article" date="2004" name="Science">
        <title>A predator unmasked: life cycle of Bdellovibrio bacteriovorus from a genomic perspective.</title>
        <authorList>
            <person name="Rendulic S."/>
            <person name="Jagtap P."/>
            <person name="Rosinus A."/>
            <person name="Eppinger M."/>
            <person name="Baar C."/>
            <person name="Lanz C."/>
            <person name="Keller H."/>
            <person name="Lambert C."/>
            <person name="Evans K.J."/>
            <person name="Goesmann A."/>
            <person name="Meyer F."/>
            <person name="Sockett R.E."/>
            <person name="Schuster S.C."/>
        </authorList>
    </citation>
    <scope>NUCLEOTIDE SEQUENCE [LARGE SCALE GENOMIC DNA]</scope>
    <source>
        <strain>ATCC 15356 / DSM 50701 / NCIMB 9529 / HD100</strain>
    </source>
</reference>
<keyword id="KW-0997">Cell inner membrane</keyword>
<keyword id="KW-1003">Cell membrane</keyword>
<keyword id="KW-0963">Cytoplasm</keyword>
<keyword id="KW-0472">Membrane</keyword>
<keyword id="KW-0511">Multifunctional enzyme</keyword>
<keyword id="KW-0520">NAD</keyword>
<keyword id="KW-0874">Quinone</keyword>
<keyword id="KW-1185">Reference proteome</keyword>
<keyword id="KW-1278">Translocase</keyword>
<keyword id="KW-0813">Transport</keyword>
<keyword id="KW-0830">Ubiquinone</keyword>
<protein>
    <recommendedName>
        <fullName evidence="1">NADH-quinone oxidoreductase subunit C/D</fullName>
        <ecNumber evidence="1">7.1.1.-</ecNumber>
    </recommendedName>
    <alternativeName>
        <fullName evidence="1">NADH dehydrogenase I subunit C/D</fullName>
    </alternativeName>
    <alternativeName>
        <fullName evidence="1">NDH-1 subunit C/D</fullName>
    </alternativeName>
    <alternativeName>
        <fullName evidence="1">NUO3/NUO4</fullName>
    </alternativeName>
</protein>
<comment type="function">
    <text>NDH-1 shuttles electrons from NADH, via FMN and iron-sulfur (Fe-S) centers, to quinones in the respiratory chain. The immediate electron acceptor for the enzyme in this species is believed to be ubiquinone. Couples the redox reaction to proton translocation (for every two electrons transferred, four hydrogen ions are translocated across the cytoplasmic membrane), and thus conserves the redox energy in a proton gradient.</text>
</comment>
<comment type="catalytic activity">
    <reaction evidence="1">
        <text>a quinone + NADH + 5 H(+)(in) = a quinol + NAD(+) + 4 H(+)(out)</text>
        <dbReference type="Rhea" id="RHEA:57888"/>
        <dbReference type="ChEBI" id="CHEBI:15378"/>
        <dbReference type="ChEBI" id="CHEBI:24646"/>
        <dbReference type="ChEBI" id="CHEBI:57540"/>
        <dbReference type="ChEBI" id="CHEBI:57945"/>
        <dbReference type="ChEBI" id="CHEBI:132124"/>
    </reaction>
</comment>
<comment type="subunit">
    <text>NDH-1 is composed of 13 different subunits. Subunits NuoB, CD, E, F, and G constitute the peripheral sector of the complex.</text>
</comment>
<comment type="subcellular location">
    <subcellularLocation>
        <location>Cytoplasm</location>
    </subcellularLocation>
    <subcellularLocation>
        <location>Cell inner membrane</location>
        <topology>Peripheral membrane protein</topology>
    </subcellularLocation>
</comment>
<comment type="similarity">
    <text evidence="1">In the N-terminal section; belongs to the complex I 30 kDa subunit family.</text>
</comment>
<comment type="similarity">
    <text evidence="1">In the C-terminal section; belongs to the complex I 49 kDa subunit family.</text>
</comment>
<gene>
    <name evidence="1" type="primary">nuoC</name>
    <name type="synonym">nuoCD</name>
    <name type="synonym">nuoD</name>
    <name type="ordered locus">Bd3085</name>
</gene>
<feature type="chain" id="PRO_0000358621" description="NADH-quinone oxidoreductase subunit C/D">
    <location>
        <begin position="1"/>
        <end position="560"/>
    </location>
</feature>
<feature type="region of interest" description="NADH dehydrogenase I subunit C">
    <location>
        <begin position="2"/>
        <end position="157"/>
    </location>
</feature>
<feature type="region of interest" description="NADH dehydrogenase I subunit D">
    <location>
        <begin position="175"/>
        <end position="560"/>
    </location>
</feature>
<name>NUOCD_BDEBA</name>
<organism>
    <name type="scientific">Bdellovibrio bacteriovorus (strain ATCC 15356 / DSM 50701 / NCIMB 9529 / HD100)</name>
    <dbReference type="NCBI Taxonomy" id="264462"/>
    <lineage>
        <taxon>Bacteria</taxon>
        <taxon>Pseudomonadati</taxon>
        <taxon>Bdellovibrionota</taxon>
        <taxon>Bdellovibrionia</taxon>
        <taxon>Bdellovibrionales</taxon>
        <taxon>Pseudobdellovibrionaceae</taxon>
        <taxon>Bdellovibrio</taxon>
    </lineage>
</organism>
<accession>Q6MIR5</accession>
<evidence type="ECO:0000255" key="1">
    <source>
        <dbReference type="HAMAP-Rule" id="MF_01397"/>
    </source>
</evidence>
<dbReference type="EC" id="7.1.1.-" evidence="1"/>
<dbReference type="EMBL" id="BX842654">
    <property type="protein sequence ID" value="CAE80848.1"/>
    <property type="molecule type" value="Genomic_DNA"/>
</dbReference>
<dbReference type="RefSeq" id="WP_011165452.1">
    <property type="nucleotide sequence ID" value="NC_005363.1"/>
</dbReference>
<dbReference type="SMR" id="Q6MIR5"/>
<dbReference type="STRING" id="264462.Bd3085"/>
<dbReference type="GeneID" id="93014746"/>
<dbReference type="KEGG" id="bba:Bd3085"/>
<dbReference type="eggNOG" id="COG0649">
    <property type="taxonomic scope" value="Bacteria"/>
</dbReference>
<dbReference type="eggNOG" id="COG0852">
    <property type="taxonomic scope" value="Bacteria"/>
</dbReference>
<dbReference type="HOGENOM" id="CLU_015134_3_2_7"/>
<dbReference type="Proteomes" id="UP000008080">
    <property type="component" value="Chromosome"/>
</dbReference>
<dbReference type="GO" id="GO:0005737">
    <property type="term" value="C:cytoplasm"/>
    <property type="evidence" value="ECO:0007669"/>
    <property type="project" value="UniProtKB-SubCell"/>
</dbReference>
<dbReference type="GO" id="GO:0030964">
    <property type="term" value="C:NADH dehydrogenase complex"/>
    <property type="evidence" value="ECO:0007669"/>
    <property type="project" value="InterPro"/>
</dbReference>
<dbReference type="GO" id="GO:0005886">
    <property type="term" value="C:plasma membrane"/>
    <property type="evidence" value="ECO:0007669"/>
    <property type="project" value="UniProtKB-SubCell"/>
</dbReference>
<dbReference type="GO" id="GO:0051287">
    <property type="term" value="F:NAD binding"/>
    <property type="evidence" value="ECO:0007669"/>
    <property type="project" value="InterPro"/>
</dbReference>
<dbReference type="GO" id="GO:0008137">
    <property type="term" value="F:NADH dehydrogenase (ubiquinone) activity"/>
    <property type="evidence" value="ECO:0007669"/>
    <property type="project" value="InterPro"/>
</dbReference>
<dbReference type="GO" id="GO:0050136">
    <property type="term" value="F:NADH:ubiquinone reductase (non-electrogenic) activity"/>
    <property type="evidence" value="ECO:0007669"/>
    <property type="project" value="InterPro"/>
</dbReference>
<dbReference type="GO" id="GO:0048038">
    <property type="term" value="F:quinone binding"/>
    <property type="evidence" value="ECO:0007669"/>
    <property type="project" value="UniProtKB-KW"/>
</dbReference>
<dbReference type="Gene3D" id="1.10.645.10">
    <property type="entry name" value="Cytochrome-c3 Hydrogenase, chain B"/>
    <property type="match status" value="1"/>
</dbReference>
<dbReference type="Gene3D" id="3.30.460.80">
    <property type="entry name" value="NADH:ubiquinone oxidoreductase, 30kDa subunit"/>
    <property type="match status" value="1"/>
</dbReference>
<dbReference type="HAMAP" id="MF_01357">
    <property type="entry name" value="NDH1_NuoC"/>
    <property type="match status" value="1"/>
</dbReference>
<dbReference type="HAMAP" id="MF_01397">
    <property type="entry name" value="NDH1_NuoCD_2"/>
    <property type="match status" value="1"/>
</dbReference>
<dbReference type="HAMAP" id="MF_01358">
    <property type="entry name" value="NDH1_NuoD"/>
    <property type="match status" value="1"/>
</dbReference>
<dbReference type="InterPro" id="IPR010218">
    <property type="entry name" value="NADH_DH_suC"/>
</dbReference>
<dbReference type="InterPro" id="IPR001135">
    <property type="entry name" value="NADH_Q_OxRdtase_suD"/>
</dbReference>
<dbReference type="InterPro" id="IPR037232">
    <property type="entry name" value="NADH_quin_OxRdtase_su_C/D-like"/>
</dbReference>
<dbReference type="InterPro" id="IPR001268">
    <property type="entry name" value="NADH_UbQ_OxRdtase_30kDa_su"/>
</dbReference>
<dbReference type="InterPro" id="IPR020396">
    <property type="entry name" value="NADH_UbQ_OxRdtase_CS"/>
</dbReference>
<dbReference type="InterPro" id="IPR026662">
    <property type="entry name" value="NDH-1_subunit_CD"/>
</dbReference>
<dbReference type="InterPro" id="IPR022885">
    <property type="entry name" value="NDH1_su_D/H"/>
</dbReference>
<dbReference type="InterPro" id="IPR029014">
    <property type="entry name" value="NiFe-Hase_large"/>
</dbReference>
<dbReference type="NCBIfam" id="TIGR01961">
    <property type="entry name" value="NuoC_fam"/>
    <property type="match status" value="1"/>
</dbReference>
<dbReference type="NCBIfam" id="TIGR01962">
    <property type="entry name" value="NuoD"/>
    <property type="match status" value="1"/>
</dbReference>
<dbReference type="NCBIfam" id="NF004739">
    <property type="entry name" value="PRK06075.1"/>
    <property type="match status" value="1"/>
</dbReference>
<dbReference type="PANTHER" id="PTHR11993:SF10">
    <property type="entry name" value="NADH DEHYDROGENASE [UBIQUINONE] IRON-SULFUR PROTEIN 2, MITOCHONDRIAL"/>
    <property type="match status" value="1"/>
</dbReference>
<dbReference type="PANTHER" id="PTHR11993">
    <property type="entry name" value="NADH-UBIQUINONE OXIDOREDUCTASE 49 KDA SUBUNIT"/>
    <property type="match status" value="1"/>
</dbReference>
<dbReference type="Pfam" id="PF00329">
    <property type="entry name" value="Complex1_30kDa"/>
    <property type="match status" value="1"/>
</dbReference>
<dbReference type="Pfam" id="PF00346">
    <property type="entry name" value="Complex1_49kDa"/>
    <property type="match status" value="1"/>
</dbReference>
<dbReference type="SUPFAM" id="SSF56762">
    <property type="entry name" value="HydB/Nqo4-like"/>
    <property type="match status" value="1"/>
</dbReference>
<dbReference type="SUPFAM" id="SSF143243">
    <property type="entry name" value="Nqo5-like"/>
    <property type="match status" value="1"/>
</dbReference>
<dbReference type="PROSITE" id="PS00542">
    <property type="entry name" value="COMPLEX1_30K"/>
    <property type="match status" value="1"/>
</dbReference>